<sequence>MSLPMLQVALDNQTMDSAYETTRLIAEEVDIIEVGTILCVGEGVRAVRDLKALYPHKIVLADAKIADAGKILSRMCFEANADWVTVICCADINTAKGALDVAKEFNGDVQIELTGYWTWEQAQQWRDAGIQQVVYHRSRDAQAAGVAWGEADITAIKRLSDMGFKVTVTGGLALEDLPLFKGIPIHVFIAGRSIRDAASPVEAARQFKRSIAELWG</sequence>
<proteinExistence type="inferred from homology"/>
<protein>
    <recommendedName>
        <fullName evidence="1">3-keto-L-gulonate-6-phosphate decarboxylase UlaD</fullName>
        <ecNumber evidence="1">4.1.1.85</ecNumber>
    </recommendedName>
    <alternativeName>
        <fullName evidence="1">3-dehydro-L-gulonate-6-phosphate decarboxylase</fullName>
    </alternativeName>
    <alternativeName>
        <fullName evidence="1">KGPDC</fullName>
    </alternativeName>
    <alternativeName>
        <fullName evidence="1">L-ascorbate utilization protein D</fullName>
    </alternativeName>
</protein>
<name>ULAD_SHIBS</name>
<feature type="chain" id="PRO_0000236095" description="3-keto-L-gulonate-6-phosphate decarboxylase UlaD">
    <location>
        <begin position="1"/>
        <end position="216"/>
    </location>
</feature>
<feature type="binding site" evidence="1">
    <location>
        <position position="11"/>
    </location>
    <ligand>
        <name>substrate</name>
    </ligand>
</feature>
<feature type="binding site" evidence="1">
    <location>
        <position position="33"/>
    </location>
    <ligand>
        <name>Mg(2+)</name>
        <dbReference type="ChEBI" id="CHEBI:18420"/>
    </ligand>
</feature>
<feature type="binding site" evidence="1">
    <location>
        <position position="62"/>
    </location>
    <ligand>
        <name>Mg(2+)</name>
        <dbReference type="ChEBI" id="CHEBI:18420"/>
    </ligand>
</feature>
<feature type="binding site" evidence="1">
    <location>
        <position position="192"/>
    </location>
    <ligand>
        <name>substrate</name>
    </ligand>
</feature>
<feature type="site" description="Transition state stabilizer" evidence="1">
    <location>
        <position position="64"/>
    </location>
</feature>
<feature type="site" description="Transition state stabilizer" evidence="1">
    <location>
        <position position="67"/>
    </location>
</feature>
<dbReference type="EC" id="4.1.1.85" evidence="1"/>
<dbReference type="EMBL" id="CP000036">
    <property type="protein sequence ID" value="ABB68681.1"/>
    <property type="molecule type" value="Genomic_DNA"/>
</dbReference>
<dbReference type="RefSeq" id="WP_000056760.1">
    <property type="nucleotide sequence ID" value="NC_007613.1"/>
</dbReference>
<dbReference type="SMR" id="Q31TC7"/>
<dbReference type="GeneID" id="75202430"/>
<dbReference type="KEGG" id="sbo:SBO_4259"/>
<dbReference type="HOGENOM" id="CLU_081825_0_0_6"/>
<dbReference type="UniPathway" id="UPA00263">
    <property type="reaction ID" value="UER00378"/>
</dbReference>
<dbReference type="Proteomes" id="UP000007067">
    <property type="component" value="Chromosome"/>
</dbReference>
<dbReference type="GO" id="GO:0033982">
    <property type="term" value="F:3-dehydro-L-gulonate-6-phosphate decarboxylase activity"/>
    <property type="evidence" value="ECO:0007669"/>
    <property type="project" value="UniProtKB-EC"/>
</dbReference>
<dbReference type="GO" id="GO:0000287">
    <property type="term" value="F:magnesium ion binding"/>
    <property type="evidence" value="ECO:0007669"/>
    <property type="project" value="UniProtKB-UniRule"/>
</dbReference>
<dbReference type="GO" id="GO:0004590">
    <property type="term" value="F:orotidine-5'-phosphate decarboxylase activity"/>
    <property type="evidence" value="ECO:0007669"/>
    <property type="project" value="InterPro"/>
</dbReference>
<dbReference type="GO" id="GO:0006207">
    <property type="term" value="P:'de novo' pyrimidine nucleobase biosynthetic process"/>
    <property type="evidence" value="ECO:0007669"/>
    <property type="project" value="InterPro"/>
</dbReference>
<dbReference type="GO" id="GO:0019854">
    <property type="term" value="P:L-ascorbic acid catabolic process"/>
    <property type="evidence" value="ECO:0007669"/>
    <property type="project" value="UniProtKB-UniRule"/>
</dbReference>
<dbReference type="CDD" id="cd04726">
    <property type="entry name" value="KGPDC_HPS"/>
    <property type="match status" value="1"/>
</dbReference>
<dbReference type="FunFam" id="3.20.20.70:FF:000022">
    <property type="entry name" value="3-keto-L-gulonate-6-phosphate decarboxylase UlaD"/>
    <property type="match status" value="1"/>
</dbReference>
<dbReference type="Gene3D" id="3.20.20.70">
    <property type="entry name" value="Aldolase class I"/>
    <property type="match status" value="1"/>
</dbReference>
<dbReference type="HAMAP" id="MF_01267">
    <property type="entry name" value="UlaD"/>
    <property type="match status" value="1"/>
</dbReference>
<dbReference type="InterPro" id="IPR023942">
    <property type="entry name" value="3-keto-L-gulonate6Pdecase_UlaD"/>
</dbReference>
<dbReference type="InterPro" id="IPR013785">
    <property type="entry name" value="Aldolase_TIM"/>
</dbReference>
<dbReference type="InterPro" id="IPR041710">
    <property type="entry name" value="HPS/KGPDC"/>
</dbReference>
<dbReference type="InterPro" id="IPR001754">
    <property type="entry name" value="OMPdeCOase_dom"/>
</dbReference>
<dbReference type="InterPro" id="IPR011060">
    <property type="entry name" value="RibuloseP-bd_barrel"/>
</dbReference>
<dbReference type="NCBIfam" id="NF009832">
    <property type="entry name" value="PRK13306.1"/>
    <property type="match status" value="1"/>
</dbReference>
<dbReference type="PANTHER" id="PTHR35039">
    <property type="entry name" value="3-KETO-L-GULONATE-6-PHOSPHATE DECARBOXYLASE SGBH-RELATED"/>
    <property type="match status" value="1"/>
</dbReference>
<dbReference type="PANTHER" id="PTHR35039:SF3">
    <property type="entry name" value="3-KETO-L-GULONATE-6-PHOSPHATE DECARBOXYLASE SGBH-RELATED"/>
    <property type="match status" value="1"/>
</dbReference>
<dbReference type="Pfam" id="PF00215">
    <property type="entry name" value="OMPdecase"/>
    <property type="match status" value="1"/>
</dbReference>
<dbReference type="SMART" id="SM00934">
    <property type="entry name" value="OMPdecase"/>
    <property type="match status" value="1"/>
</dbReference>
<dbReference type="SUPFAM" id="SSF51366">
    <property type="entry name" value="Ribulose-phoshate binding barrel"/>
    <property type="match status" value="1"/>
</dbReference>
<organism>
    <name type="scientific">Shigella boydii serotype 4 (strain Sb227)</name>
    <dbReference type="NCBI Taxonomy" id="300268"/>
    <lineage>
        <taxon>Bacteria</taxon>
        <taxon>Pseudomonadati</taxon>
        <taxon>Pseudomonadota</taxon>
        <taxon>Gammaproteobacteria</taxon>
        <taxon>Enterobacterales</taxon>
        <taxon>Enterobacteriaceae</taxon>
        <taxon>Shigella</taxon>
    </lineage>
</organism>
<keyword id="KW-0119">Carbohydrate metabolism</keyword>
<keyword id="KW-0210">Decarboxylase</keyword>
<keyword id="KW-0456">Lyase</keyword>
<keyword id="KW-0460">Magnesium</keyword>
<keyword id="KW-0479">Metal-binding</keyword>
<evidence type="ECO:0000255" key="1">
    <source>
        <dbReference type="HAMAP-Rule" id="MF_01267"/>
    </source>
</evidence>
<reference key="1">
    <citation type="journal article" date="2005" name="Nucleic Acids Res.">
        <title>Genome dynamics and diversity of Shigella species, the etiologic agents of bacillary dysentery.</title>
        <authorList>
            <person name="Yang F."/>
            <person name="Yang J."/>
            <person name="Zhang X."/>
            <person name="Chen L."/>
            <person name="Jiang Y."/>
            <person name="Yan Y."/>
            <person name="Tang X."/>
            <person name="Wang J."/>
            <person name="Xiong Z."/>
            <person name="Dong J."/>
            <person name="Xue Y."/>
            <person name="Zhu Y."/>
            <person name="Xu X."/>
            <person name="Sun L."/>
            <person name="Chen S."/>
            <person name="Nie H."/>
            <person name="Peng J."/>
            <person name="Xu J."/>
            <person name="Wang Y."/>
            <person name="Yuan Z."/>
            <person name="Wen Y."/>
            <person name="Yao Z."/>
            <person name="Shen Y."/>
            <person name="Qiang B."/>
            <person name="Hou Y."/>
            <person name="Yu J."/>
            <person name="Jin Q."/>
        </authorList>
    </citation>
    <scope>NUCLEOTIDE SEQUENCE [LARGE SCALE GENOMIC DNA]</scope>
    <source>
        <strain>Sb227</strain>
    </source>
</reference>
<comment type="function">
    <text evidence="1">Catalyzes the decarboxylation of 3-keto-L-gulonate-6-P into L-xylulose-5-P. Is involved in the anaerobic L-ascorbate utilization.</text>
</comment>
<comment type="catalytic activity">
    <reaction evidence="1">
        <text>3-dehydro-L-gulonate 6-phosphate + H(+) = L-xylulose 5-phosphate + CO2</text>
        <dbReference type="Rhea" id="RHEA:14353"/>
        <dbReference type="ChEBI" id="CHEBI:15378"/>
        <dbReference type="ChEBI" id="CHEBI:16526"/>
        <dbReference type="ChEBI" id="CHEBI:57829"/>
        <dbReference type="ChEBI" id="CHEBI:58774"/>
        <dbReference type="EC" id="4.1.1.85"/>
    </reaction>
</comment>
<comment type="cofactor">
    <cofactor evidence="1">
        <name>Mg(2+)</name>
        <dbReference type="ChEBI" id="CHEBI:18420"/>
    </cofactor>
    <text evidence="1">Binds 1 Mg(2+) ion per subunit.</text>
</comment>
<comment type="pathway">
    <text evidence="1">Cofactor degradation; L-ascorbate degradation; D-xylulose 5-phosphate from L-ascorbate: step 2/4.</text>
</comment>
<comment type="subunit">
    <text evidence="1">Homodimer.</text>
</comment>
<comment type="induction">
    <text evidence="1">Induced by L-ascorbate. Repressed by UlaR.</text>
</comment>
<comment type="similarity">
    <text evidence="1">Belongs to the HPS/KGPDC family. KGPDC subfamily.</text>
</comment>
<accession>Q31TC7</accession>
<gene>
    <name evidence="1" type="primary">ulaD</name>
    <name type="ordered locus">SBO_4259</name>
</gene>